<reference key="1">
    <citation type="journal article" date="2006" name="Proc. Natl. Acad. Sci. U.S.A.">
        <title>Burkholderia xenovorans LB400 harbors a multi-replicon, 9.73-Mbp genome shaped for versatility.</title>
        <authorList>
            <person name="Chain P.S.G."/>
            <person name="Denef V.J."/>
            <person name="Konstantinidis K.T."/>
            <person name="Vergez L.M."/>
            <person name="Agullo L."/>
            <person name="Reyes V.L."/>
            <person name="Hauser L."/>
            <person name="Cordova M."/>
            <person name="Gomez L."/>
            <person name="Gonzalez M."/>
            <person name="Land M."/>
            <person name="Lao V."/>
            <person name="Larimer F."/>
            <person name="LiPuma J.J."/>
            <person name="Mahenthiralingam E."/>
            <person name="Malfatti S.A."/>
            <person name="Marx C.J."/>
            <person name="Parnell J.J."/>
            <person name="Ramette A."/>
            <person name="Richardson P."/>
            <person name="Seeger M."/>
            <person name="Smith D."/>
            <person name="Spilker T."/>
            <person name="Sul W.J."/>
            <person name="Tsoi T.V."/>
            <person name="Ulrich L.E."/>
            <person name="Zhulin I.B."/>
            <person name="Tiedje J.M."/>
        </authorList>
    </citation>
    <scope>NUCLEOTIDE SEQUENCE [LARGE SCALE GENOMIC DNA]</scope>
    <source>
        <strain>LB400</strain>
    </source>
</reference>
<gene>
    <name type="ordered locus">Bxeno_A4428</name>
    <name type="ORF">Bxe_A4465</name>
</gene>
<proteinExistence type="inferred from homology"/>
<protein>
    <recommendedName>
        <fullName evidence="1">Putative membrane protein insertion efficiency factor</fullName>
    </recommendedName>
</protein>
<comment type="function">
    <text evidence="1">Could be involved in insertion of integral membrane proteins into the membrane.</text>
</comment>
<comment type="subcellular location">
    <subcellularLocation>
        <location evidence="1">Cell inner membrane</location>
        <topology evidence="1">Peripheral membrane protein</topology>
        <orientation evidence="1">Cytoplasmic side</orientation>
    </subcellularLocation>
</comment>
<comment type="similarity">
    <text evidence="1">Belongs to the UPF0161 family.</text>
</comment>
<feature type="chain" id="PRO_0000253092" description="Putative membrane protein insertion efficiency factor">
    <location>
        <begin position="1"/>
        <end position="76"/>
    </location>
</feature>
<accession>Q13SH3</accession>
<evidence type="ECO:0000255" key="1">
    <source>
        <dbReference type="HAMAP-Rule" id="MF_00386"/>
    </source>
</evidence>
<sequence>MQTVLIALLRFYKVAVSPMLGNRCRFYPSCSDYAREAIQYHGAARGTYLAARRICRCHPFSAGGIDLVPPPTSEKR</sequence>
<dbReference type="EMBL" id="CP000270">
    <property type="protein sequence ID" value="ABE32966.1"/>
    <property type="molecule type" value="Genomic_DNA"/>
</dbReference>
<dbReference type="STRING" id="266265.Bxe_A4465"/>
<dbReference type="KEGG" id="bxe:Bxe_A4465"/>
<dbReference type="eggNOG" id="COG0759">
    <property type="taxonomic scope" value="Bacteria"/>
</dbReference>
<dbReference type="OrthoDB" id="9801753at2"/>
<dbReference type="Proteomes" id="UP000001817">
    <property type="component" value="Chromosome 1"/>
</dbReference>
<dbReference type="GO" id="GO:0005886">
    <property type="term" value="C:plasma membrane"/>
    <property type="evidence" value="ECO:0007669"/>
    <property type="project" value="UniProtKB-SubCell"/>
</dbReference>
<dbReference type="HAMAP" id="MF_00386">
    <property type="entry name" value="UPF0161_YidD"/>
    <property type="match status" value="1"/>
</dbReference>
<dbReference type="InterPro" id="IPR002696">
    <property type="entry name" value="Membr_insert_effic_factor_YidD"/>
</dbReference>
<dbReference type="NCBIfam" id="TIGR00278">
    <property type="entry name" value="membrane protein insertion efficiency factor YidD"/>
    <property type="match status" value="1"/>
</dbReference>
<dbReference type="PANTHER" id="PTHR33383">
    <property type="entry name" value="MEMBRANE PROTEIN INSERTION EFFICIENCY FACTOR-RELATED"/>
    <property type="match status" value="1"/>
</dbReference>
<dbReference type="PANTHER" id="PTHR33383:SF1">
    <property type="entry name" value="MEMBRANE PROTEIN INSERTION EFFICIENCY FACTOR-RELATED"/>
    <property type="match status" value="1"/>
</dbReference>
<dbReference type="Pfam" id="PF01809">
    <property type="entry name" value="YidD"/>
    <property type="match status" value="1"/>
</dbReference>
<dbReference type="SMART" id="SM01234">
    <property type="entry name" value="Haemolytic"/>
    <property type="match status" value="1"/>
</dbReference>
<keyword id="KW-0997">Cell inner membrane</keyword>
<keyword id="KW-1003">Cell membrane</keyword>
<keyword id="KW-0472">Membrane</keyword>
<keyword id="KW-1185">Reference proteome</keyword>
<name>YIDD_PARXL</name>
<organism>
    <name type="scientific">Paraburkholderia xenovorans (strain LB400)</name>
    <dbReference type="NCBI Taxonomy" id="266265"/>
    <lineage>
        <taxon>Bacteria</taxon>
        <taxon>Pseudomonadati</taxon>
        <taxon>Pseudomonadota</taxon>
        <taxon>Betaproteobacteria</taxon>
        <taxon>Burkholderiales</taxon>
        <taxon>Burkholderiaceae</taxon>
        <taxon>Paraburkholderia</taxon>
    </lineage>
</organism>